<evidence type="ECO:0000255" key="1">
    <source>
        <dbReference type="HAMAP-Rule" id="MF_01179"/>
    </source>
</evidence>
<protein>
    <recommendedName>
        <fullName evidence="1">Cell division inhibitor SulA</fullName>
    </recommendedName>
</protein>
<gene>
    <name evidence="1" type="primary">sulA</name>
    <name type="ordered locus">Ecok1_08730</name>
    <name type="ORF">APECO1_63</name>
</gene>
<organism>
    <name type="scientific">Escherichia coli O1:K1 / APEC</name>
    <dbReference type="NCBI Taxonomy" id="405955"/>
    <lineage>
        <taxon>Bacteria</taxon>
        <taxon>Pseudomonadati</taxon>
        <taxon>Pseudomonadota</taxon>
        <taxon>Gammaproteobacteria</taxon>
        <taxon>Enterobacterales</taxon>
        <taxon>Enterobacteriaceae</taxon>
        <taxon>Escherichia</taxon>
    </lineage>
</organism>
<comment type="function">
    <text evidence="1">Component of the SOS system and an inhibitor of cell division. Accumulation of SulA causes rapid cessation of cell division and the appearance of long, non-septate filaments. In the presence of GTP, binds a polymerization-competent form of FtsZ in a 1:1 ratio, thus inhibiting FtsZ polymerization and therefore preventing it from participating in the assembly of the Z ring. This mechanism prevents the premature segregation of damaged DNA to daughter cells during cell division.</text>
</comment>
<comment type="subunit">
    <text evidence="1">Interacts with FtsZ.</text>
</comment>
<comment type="induction">
    <text evidence="1">By DNA damage, as part of the SOS response.</text>
</comment>
<comment type="PTM">
    <text evidence="1">Is rapidly cleaved and degraded by the Lon protease once DNA damage is repaired.</text>
</comment>
<comment type="similarity">
    <text evidence="1">Belongs to the SulA family.</text>
</comment>
<reference key="1">
    <citation type="journal article" date="2007" name="J. Bacteriol.">
        <title>The genome sequence of avian pathogenic Escherichia coli strain O1:K1:H7 shares strong similarities with human extraintestinal pathogenic E. coli genomes.</title>
        <authorList>
            <person name="Johnson T.J."/>
            <person name="Kariyawasam S."/>
            <person name="Wannemuehler Y."/>
            <person name="Mangiamele P."/>
            <person name="Johnson S.J."/>
            <person name="Doetkott C."/>
            <person name="Skyberg J.A."/>
            <person name="Lynne A.M."/>
            <person name="Johnson J.R."/>
            <person name="Nolan L.K."/>
        </authorList>
    </citation>
    <scope>NUCLEOTIDE SEQUENCE [LARGE SCALE GENOMIC DNA]</scope>
</reference>
<sequence length="169" mass="18843">MYTAGYAHRDSSFSSTASKIARVSTENTTAGLISEVVYREDQPMMTQLLLLPLLQQLGQQSRWQLWLTPQQKLSREWVQASGLPLTKVMQISQLSPCHTVESMVRALRTGNYSVVIGWLADDLTEEEHAELVDAANEGNAMGFIMRPVSASSHATRQLSGLKIHSNLYH</sequence>
<keyword id="KW-0131">Cell cycle</keyword>
<keyword id="KW-0132">Cell division</keyword>
<keyword id="KW-0227">DNA damage</keyword>
<keyword id="KW-1185">Reference proteome</keyword>
<keyword id="KW-0717">Septation</keyword>
<keyword id="KW-0742">SOS response</keyword>
<proteinExistence type="inferred from homology"/>
<name>SULA_ECOK1</name>
<accession>A1A9M7</accession>
<feature type="chain" id="PRO_0000343963" description="Cell division inhibitor SulA">
    <location>
        <begin position="1"/>
        <end position="169"/>
    </location>
</feature>
<feature type="region of interest" description="FtsZ binding" evidence="1">
    <location>
        <begin position="106"/>
        <end position="112"/>
    </location>
</feature>
<feature type="region of interest" description="Lon protease binding" evidence="1">
    <location>
        <begin position="162"/>
        <end position="169"/>
    </location>
</feature>
<feature type="site" description="Essential for degradation by Lon protease" evidence="1">
    <location>
        <position position="169"/>
    </location>
</feature>
<dbReference type="EMBL" id="CP000468">
    <property type="protein sequence ID" value="ABJ00367.1"/>
    <property type="molecule type" value="Genomic_DNA"/>
</dbReference>
<dbReference type="RefSeq" id="WP_000287750.1">
    <property type="nucleotide sequence ID" value="NZ_CADILS010000016.1"/>
</dbReference>
<dbReference type="SMR" id="A1A9M7"/>
<dbReference type="KEGG" id="ecv:APECO1_63"/>
<dbReference type="HOGENOM" id="CLU_118972_1_0_6"/>
<dbReference type="Proteomes" id="UP000008216">
    <property type="component" value="Chromosome"/>
</dbReference>
<dbReference type="GO" id="GO:0000917">
    <property type="term" value="P:division septum assembly"/>
    <property type="evidence" value="ECO:0007669"/>
    <property type="project" value="UniProtKB-KW"/>
</dbReference>
<dbReference type="GO" id="GO:0006281">
    <property type="term" value="P:DNA repair"/>
    <property type="evidence" value="ECO:0007669"/>
    <property type="project" value="TreeGrafter"/>
</dbReference>
<dbReference type="GO" id="GO:0051782">
    <property type="term" value="P:negative regulation of cell division"/>
    <property type="evidence" value="ECO:0007669"/>
    <property type="project" value="UniProtKB-UniRule"/>
</dbReference>
<dbReference type="GO" id="GO:0009432">
    <property type="term" value="P:SOS response"/>
    <property type="evidence" value="ECO:0007669"/>
    <property type="project" value="UniProtKB-UniRule"/>
</dbReference>
<dbReference type="FunFam" id="3.40.50.300:FF:000417">
    <property type="entry name" value="Cell division inhibitor SulA"/>
    <property type="match status" value="1"/>
</dbReference>
<dbReference type="Gene3D" id="3.40.50.300">
    <property type="entry name" value="P-loop containing nucleotide triphosphate hydrolases"/>
    <property type="match status" value="1"/>
</dbReference>
<dbReference type="HAMAP" id="MF_01179">
    <property type="entry name" value="SulA"/>
    <property type="match status" value="1"/>
</dbReference>
<dbReference type="InterPro" id="IPR004596">
    <property type="entry name" value="Cell_div_suppressor_SulA"/>
</dbReference>
<dbReference type="InterPro" id="IPR027417">
    <property type="entry name" value="P-loop_NTPase"/>
</dbReference>
<dbReference type="InterPro" id="IPR050356">
    <property type="entry name" value="SulA_CellDiv_inhibitor"/>
</dbReference>
<dbReference type="InterPro" id="IPR047696">
    <property type="entry name" value="SulA_enterobact"/>
</dbReference>
<dbReference type="NCBIfam" id="NF007892">
    <property type="entry name" value="PRK10595.1"/>
    <property type="match status" value="1"/>
</dbReference>
<dbReference type="NCBIfam" id="TIGR00623">
    <property type="entry name" value="SOS_SulA_coli"/>
    <property type="match status" value="1"/>
</dbReference>
<dbReference type="PANTHER" id="PTHR35369">
    <property type="entry name" value="BLR3025 PROTEIN-RELATED"/>
    <property type="match status" value="1"/>
</dbReference>
<dbReference type="PANTHER" id="PTHR35369:SF4">
    <property type="entry name" value="CELL DIVISION INHIBITOR SULA"/>
    <property type="match status" value="1"/>
</dbReference>
<dbReference type="Pfam" id="PF03846">
    <property type="entry name" value="SulA"/>
    <property type="match status" value="1"/>
</dbReference>
<dbReference type="PIRSF" id="PIRSF003093">
    <property type="entry name" value="SulA"/>
    <property type="match status" value="1"/>
</dbReference>
<dbReference type="SUPFAM" id="SSF52540">
    <property type="entry name" value="P-loop containing nucleoside triphosphate hydrolases"/>
    <property type="match status" value="1"/>
</dbReference>